<reference key="1">
    <citation type="submission" date="2007-06" db="EMBL/GenBank/DDBJ databases">
        <title>Complete sequence of Methanococcus aeolicus Nankai-3.</title>
        <authorList>
            <consortium name="US DOE Joint Genome Institute"/>
            <person name="Copeland A."/>
            <person name="Lucas S."/>
            <person name="Lapidus A."/>
            <person name="Barry K."/>
            <person name="Glavina del Rio T."/>
            <person name="Dalin E."/>
            <person name="Tice H."/>
            <person name="Pitluck S."/>
            <person name="Chain P."/>
            <person name="Malfatti S."/>
            <person name="Shin M."/>
            <person name="Vergez L."/>
            <person name="Schmutz J."/>
            <person name="Larimer F."/>
            <person name="Land M."/>
            <person name="Hauser L."/>
            <person name="Kyrpides N."/>
            <person name="Lykidis A."/>
            <person name="Sieprawska-Lupa M."/>
            <person name="Whitman W.B."/>
            <person name="Richardson P."/>
        </authorList>
    </citation>
    <scope>NUCLEOTIDE SEQUENCE [LARGE SCALE GENOMIC DNA]</scope>
    <source>
        <strain>ATCC BAA-1280 / DSM 17508 / OCM 812 / Nankai-3</strain>
    </source>
</reference>
<evidence type="ECO:0000255" key="1">
    <source>
        <dbReference type="HAMAP-Rule" id="MF_01221"/>
    </source>
</evidence>
<name>Y1412_META3</name>
<proteinExistence type="inferred from homology"/>
<feature type="chain" id="PRO_1000066761" description="UPF0210 protein Maeo_1412">
    <location>
        <begin position="1"/>
        <end position="458"/>
    </location>
</feature>
<comment type="similarity">
    <text evidence="1">Belongs to the UPF0210 family.</text>
</comment>
<dbReference type="EMBL" id="CP000743">
    <property type="protein sequence ID" value="ABR56988.1"/>
    <property type="molecule type" value="Genomic_DNA"/>
</dbReference>
<dbReference type="RefSeq" id="WP_011974120.1">
    <property type="nucleotide sequence ID" value="NC_009635.1"/>
</dbReference>
<dbReference type="SMR" id="A6UWW6"/>
<dbReference type="STRING" id="419665.Maeo_1412"/>
<dbReference type="GeneID" id="5326637"/>
<dbReference type="KEGG" id="mae:Maeo_1412"/>
<dbReference type="eggNOG" id="arCOG04321">
    <property type="taxonomic scope" value="Archaea"/>
</dbReference>
<dbReference type="HOGENOM" id="CLU_048704_0_0_2"/>
<dbReference type="OrthoDB" id="21376at2157"/>
<dbReference type="Proteomes" id="UP000001106">
    <property type="component" value="Chromosome"/>
</dbReference>
<dbReference type="CDD" id="cd08025">
    <property type="entry name" value="RNR_PFL_like_DUF711"/>
    <property type="match status" value="1"/>
</dbReference>
<dbReference type="Gene3D" id="3.20.70.20">
    <property type="match status" value="1"/>
</dbReference>
<dbReference type="HAMAP" id="MF_01221">
    <property type="entry name" value="UPF0210"/>
    <property type="match status" value="1"/>
</dbReference>
<dbReference type="InterPro" id="IPR007841">
    <property type="entry name" value="UPF0210"/>
</dbReference>
<dbReference type="NCBIfam" id="NF003700">
    <property type="entry name" value="PRK05313.1"/>
    <property type="match status" value="1"/>
</dbReference>
<dbReference type="PANTHER" id="PTHR37560:SF1">
    <property type="entry name" value="UPF0210 PROTEIN MJ1665"/>
    <property type="match status" value="1"/>
</dbReference>
<dbReference type="PANTHER" id="PTHR37560">
    <property type="entry name" value="UPF0210 PROTEIN SPR0218"/>
    <property type="match status" value="1"/>
</dbReference>
<dbReference type="Pfam" id="PF05167">
    <property type="entry name" value="DUF711"/>
    <property type="match status" value="1"/>
</dbReference>
<dbReference type="SUPFAM" id="SSF51998">
    <property type="entry name" value="PFL-like glycyl radical enzymes"/>
    <property type="match status" value="1"/>
</dbReference>
<organism>
    <name type="scientific">Methanococcus aeolicus (strain ATCC BAA-1280 / DSM 17508 / OCM 812 / Nankai-3)</name>
    <dbReference type="NCBI Taxonomy" id="419665"/>
    <lineage>
        <taxon>Archaea</taxon>
        <taxon>Methanobacteriati</taxon>
        <taxon>Methanobacteriota</taxon>
        <taxon>Methanomada group</taxon>
        <taxon>Methanococci</taxon>
        <taxon>Methanococcales</taxon>
        <taxon>Methanococcaceae</taxon>
        <taxon>Methanococcus</taxon>
    </lineage>
</organism>
<gene>
    <name type="ordered locus">Maeo_1412</name>
</gene>
<sequence>MFNSAEIIETITMIEHEHLDIRATTIGINLMDCISEDIDKLNENIYNKIVDKAGTLVKTAETVSKKYGIPIVTKRVSVTPIGSIIGSAIKNLEQEDAINCCVEVGKTLDKAAKDINIDFIGGYSALVQKGMTKGELALIESIPLMMKETSTVCSSINVASTKAGINLDAVKKMGEIIKETATTTKDALGCAKLVVFANAPEDNPFMAGAFHGVGEGDAVLNVGVSGPGVVRATVARLDNKDIGTVCNEIKKTAYKITRMGELIGREVATDLNIPFGIVDLSLAPTPAPGDSIANILEEIGLERCGTHGTTAALALLNDAVKKGGAMAASYVGGLSGSFIPVSEDAGMIRAVNDGALSIDKLEAMTCVCSVGLDMIAIPGKTPASTISAIIADEMAIGMVNKKTTAVRVIPVPGKDVGDFVEYGGLLGTAPIMPVNEYSSEEFINRGGRIPAPIQSMLN</sequence>
<protein>
    <recommendedName>
        <fullName evidence="1">UPF0210 protein Maeo_1412</fullName>
    </recommendedName>
</protein>
<accession>A6UWW6</accession>